<name>RBL12_ARATH</name>
<reference key="1">
    <citation type="journal article" date="2000" name="Nature">
        <title>Sequence and analysis of chromosome 1 of the plant Arabidopsis thaliana.</title>
        <authorList>
            <person name="Theologis A."/>
            <person name="Ecker J.R."/>
            <person name="Palm C.J."/>
            <person name="Federspiel N.A."/>
            <person name="Kaul S."/>
            <person name="White O."/>
            <person name="Alonso J."/>
            <person name="Altafi H."/>
            <person name="Araujo R."/>
            <person name="Bowman C.L."/>
            <person name="Brooks S.Y."/>
            <person name="Buehler E."/>
            <person name="Chan A."/>
            <person name="Chao Q."/>
            <person name="Chen H."/>
            <person name="Cheuk R.F."/>
            <person name="Chin C.W."/>
            <person name="Chung M.K."/>
            <person name="Conn L."/>
            <person name="Conway A.B."/>
            <person name="Conway A.R."/>
            <person name="Creasy T.H."/>
            <person name="Dewar K."/>
            <person name="Dunn P."/>
            <person name="Etgu P."/>
            <person name="Feldblyum T.V."/>
            <person name="Feng J.-D."/>
            <person name="Fong B."/>
            <person name="Fujii C.Y."/>
            <person name="Gill J.E."/>
            <person name="Goldsmith A.D."/>
            <person name="Haas B."/>
            <person name="Hansen N.F."/>
            <person name="Hughes B."/>
            <person name="Huizar L."/>
            <person name="Hunter J.L."/>
            <person name="Jenkins J."/>
            <person name="Johnson-Hopson C."/>
            <person name="Khan S."/>
            <person name="Khaykin E."/>
            <person name="Kim C.J."/>
            <person name="Koo H.L."/>
            <person name="Kremenetskaia I."/>
            <person name="Kurtz D.B."/>
            <person name="Kwan A."/>
            <person name="Lam B."/>
            <person name="Langin-Hooper S."/>
            <person name="Lee A."/>
            <person name="Lee J.M."/>
            <person name="Lenz C.A."/>
            <person name="Li J.H."/>
            <person name="Li Y.-P."/>
            <person name="Lin X."/>
            <person name="Liu S.X."/>
            <person name="Liu Z.A."/>
            <person name="Luros J.S."/>
            <person name="Maiti R."/>
            <person name="Marziali A."/>
            <person name="Militscher J."/>
            <person name="Miranda M."/>
            <person name="Nguyen M."/>
            <person name="Nierman W.C."/>
            <person name="Osborne B.I."/>
            <person name="Pai G."/>
            <person name="Peterson J."/>
            <person name="Pham P.K."/>
            <person name="Rizzo M."/>
            <person name="Rooney T."/>
            <person name="Rowley D."/>
            <person name="Sakano H."/>
            <person name="Salzberg S.L."/>
            <person name="Schwartz J.R."/>
            <person name="Shinn P."/>
            <person name="Southwick A.M."/>
            <person name="Sun H."/>
            <person name="Tallon L.J."/>
            <person name="Tambunga G."/>
            <person name="Toriumi M.J."/>
            <person name="Town C.D."/>
            <person name="Utterback T."/>
            <person name="Van Aken S."/>
            <person name="Vaysberg M."/>
            <person name="Vysotskaia V.S."/>
            <person name="Walker M."/>
            <person name="Wu D."/>
            <person name="Yu G."/>
            <person name="Fraser C.M."/>
            <person name="Venter J.C."/>
            <person name="Davis R.W."/>
        </authorList>
    </citation>
    <scope>NUCLEOTIDE SEQUENCE [LARGE SCALE GENOMIC DNA]</scope>
    <source>
        <strain>cv. Columbia</strain>
    </source>
</reference>
<reference key="2">
    <citation type="journal article" date="2017" name="Plant J.">
        <title>Araport11: a complete reannotation of the Arabidopsis thaliana reference genome.</title>
        <authorList>
            <person name="Cheng C.Y."/>
            <person name="Krishnakumar V."/>
            <person name="Chan A.P."/>
            <person name="Thibaud-Nissen F."/>
            <person name="Schobel S."/>
            <person name="Town C.D."/>
        </authorList>
    </citation>
    <scope>GENOME REANNOTATION</scope>
    <source>
        <strain>cv. Columbia</strain>
    </source>
</reference>
<reference key="3">
    <citation type="journal article" date="2003" name="Science">
        <title>Empirical analysis of transcriptional activity in the Arabidopsis genome.</title>
        <authorList>
            <person name="Yamada K."/>
            <person name="Lim J."/>
            <person name="Dale J.M."/>
            <person name="Chen H."/>
            <person name="Shinn P."/>
            <person name="Palm C.J."/>
            <person name="Southwick A.M."/>
            <person name="Wu H.C."/>
            <person name="Kim C.J."/>
            <person name="Nguyen M."/>
            <person name="Pham P.K."/>
            <person name="Cheuk R.F."/>
            <person name="Karlin-Newmann G."/>
            <person name="Liu S.X."/>
            <person name="Lam B."/>
            <person name="Sakano H."/>
            <person name="Wu T."/>
            <person name="Yu G."/>
            <person name="Miranda M."/>
            <person name="Quach H.L."/>
            <person name="Tripp M."/>
            <person name="Chang C.H."/>
            <person name="Lee J.M."/>
            <person name="Toriumi M.J."/>
            <person name="Chan M.M."/>
            <person name="Tang C.C."/>
            <person name="Onodera C.S."/>
            <person name="Deng J.M."/>
            <person name="Akiyama K."/>
            <person name="Ansari Y."/>
            <person name="Arakawa T."/>
            <person name="Banh J."/>
            <person name="Banno F."/>
            <person name="Bowser L."/>
            <person name="Brooks S.Y."/>
            <person name="Carninci P."/>
            <person name="Chao Q."/>
            <person name="Choy N."/>
            <person name="Enju A."/>
            <person name="Goldsmith A.D."/>
            <person name="Gurjal M."/>
            <person name="Hansen N.F."/>
            <person name="Hayashizaki Y."/>
            <person name="Johnson-Hopson C."/>
            <person name="Hsuan V.W."/>
            <person name="Iida K."/>
            <person name="Karnes M."/>
            <person name="Khan S."/>
            <person name="Koesema E."/>
            <person name="Ishida J."/>
            <person name="Jiang P.X."/>
            <person name="Jones T."/>
            <person name="Kawai J."/>
            <person name="Kamiya A."/>
            <person name="Meyers C."/>
            <person name="Nakajima M."/>
            <person name="Narusaka M."/>
            <person name="Seki M."/>
            <person name="Sakurai T."/>
            <person name="Satou M."/>
            <person name="Tamse R."/>
            <person name="Vaysberg M."/>
            <person name="Wallender E.K."/>
            <person name="Wong C."/>
            <person name="Yamamura Y."/>
            <person name="Yuan S."/>
            <person name="Shinozaki K."/>
            <person name="Davis R.W."/>
            <person name="Theologis A."/>
            <person name="Ecker J.R."/>
        </authorList>
    </citation>
    <scope>NUCLEOTIDE SEQUENCE [LARGE SCALE MRNA]</scope>
    <source>
        <strain>cv. Columbia</strain>
    </source>
</reference>
<reference key="4">
    <citation type="submission" date="2002-03" db="EMBL/GenBank/DDBJ databases">
        <title>Full-length cDNA from Arabidopsis thaliana.</title>
        <authorList>
            <person name="Brover V.V."/>
            <person name="Troukhan M.E."/>
            <person name="Alexandrov N.A."/>
            <person name="Lu Y.-P."/>
            <person name="Flavell R.B."/>
            <person name="Feldmann K.A."/>
        </authorList>
    </citation>
    <scope>NUCLEOTIDE SEQUENCE [LARGE SCALE MRNA]</scope>
</reference>
<reference key="5">
    <citation type="journal article" date="2006" name="BMC Genomics">
        <title>Cross genome comparisons of serine proteases in Arabidopsis and rice.</title>
        <authorList>
            <person name="Tripathi L.P."/>
            <person name="Sowdhamini R."/>
        </authorList>
    </citation>
    <scope>GENE FAMILY</scope>
    <scope>NOMENCLATURE</scope>
</reference>
<reference key="6">
    <citation type="journal article" date="2006" name="BMC Plant Biol.">
        <title>Protease gene families in Populus and Arabidopsis.</title>
        <authorList>
            <person name="Garcia-Lorenzo M."/>
            <person name="Sjodin A."/>
            <person name="Jansson S."/>
            <person name="Funk C."/>
        </authorList>
    </citation>
    <scope>GENE FAMILY</scope>
    <scope>NOMENCLATURE</scope>
</reference>
<reference key="7">
    <citation type="journal article" date="2007" name="Genome Res.">
        <title>Functional and evolutionary implications of enhanced genomic analysis of rhomboid intramembrane proteases.</title>
        <authorList>
            <person name="Lemberg M.K."/>
            <person name="Freeman M."/>
        </authorList>
    </citation>
    <scope>GENE FAMILY</scope>
    <scope>NOMENCLATURE</scope>
</reference>
<reference key="8">
    <citation type="journal article" date="2008" name="Plant Mol. Biol.">
        <title>Plant mitochondrial rhomboid, AtRBL12, has different substrate specificity from its yeast counterpart.</title>
        <authorList>
            <person name="Kmiec-Wisniewska B."/>
            <person name="Krumpe K."/>
            <person name="Urantowka A."/>
            <person name="Sakamoto W."/>
            <person name="Pratje E."/>
            <person name="Janska H."/>
        </authorList>
    </citation>
    <scope>SUBCELLULAR LOCATION</scope>
    <scope>FUNCTION</scope>
</reference>
<reference key="9">
    <citation type="journal article" date="2012" name="Plant J.">
        <title>Rhomboid proteins in the chloroplast envelope affect the level of allene oxide synthase in Arabidopsis thaliana.</title>
        <authorList>
            <person name="Knopf R.R."/>
            <person name="Feder A."/>
            <person name="Mayer K."/>
            <person name="Lin A."/>
            <person name="Rozenberg M."/>
            <person name="Schaller A."/>
            <person name="Adam Z."/>
        </authorList>
    </citation>
    <scope>SUBCELLULAR LOCATION</scope>
</reference>
<reference key="10">
    <citation type="journal article" date="2012" name="Physiol. Plantarum">
        <title>Rhomboid proteases in plants - still in square one?</title>
        <authorList>
            <person name="Knopf R.R."/>
            <person name="Adam Z."/>
        </authorList>
    </citation>
    <scope>REVIEW</scope>
</reference>
<gene>
    <name evidence="5" type="primary">RBL12</name>
    <name evidence="6" type="synonym">PARL</name>
    <name evidence="9" type="ordered locus">At1g18600</name>
    <name evidence="10" type="ORF">F25I16.6</name>
</gene>
<keyword id="KW-0378">Hydrolase</keyword>
<keyword id="KW-0472">Membrane</keyword>
<keyword id="KW-0496">Mitochondrion</keyword>
<keyword id="KW-0645">Protease</keyword>
<keyword id="KW-1185">Reference proteome</keyword>
<keyword id="KW-0809">Transit peptide</keyword>
<keyword id="KW-0812">Transmembrane</keyword>
<keyword id="KW-1133">Transmembrane helix</keyword>
<organism evidence="11">
    <name type="scientific">Arabidopsis thaliana</name>
    <name type="common">Mouse-ear cress</name>
    <dbReference type="NCBI Taxonomy" id="3702"/>
    <lineage>
        <taxon>Eukaryota</taxon>
        <taxon>Viridiplantae</taxon>
        <taxon>Streptophyta</taxon>
        <taxon>Embryophyta</taxon>
        <taxon>Tracheophyta</taxon>
        <taxon>Spermatophyta</taxon>
        <taxon>Magnoliopsida</taxon>
        <taxon>eudicotyledons</taxon>
        <taxon>Gunneridae</taxon>
        <taxon>Pentapetalae</taxon>
        <taxon>rosids</taxon>
        <taxon>malvids</taxon>
        <taxon>Brassicales</taxon>
        <taxon>Brassicaceae</taxon>
        <taxon>Camelineae</taxon>
        <taxon>Arabidopsis</taxon>
    </lineage>
</organism>
<evidence type="ECO:0000250" key="1">
    <source>
        <dbReference type="UniProtKB" id="P54493"/>
    </source>
</evidence>
<evidence type="ECO:0000255" key="2"/>
<evidence type="ECO:0000269" key="3">
    <source>
    </source>
</evidence>
<evidence type="ECO:0000269" key="4">
    <source>
    </source>
</evidence>
<evidence type="ECO:0000303" key="5">
    <source>
    </source>
</evidence>
<evidence type="ECO:0000303" key="6">
    <source>
    </source>
</evidence>
<evidence type="ECO:0000305" key="7"/>
<evidence type="ECO:0000305" key="8">
    <source>
    </source>
</evidence>
<evidence type="ECO:0000312" key="9">
    <source>
        <dbReference type="Araport" id="AT1G18600"/>
    </source>
</evidence>
<evidence type="ECO:0000312" key="10">
    <source>
        <dbReference type="EMBL" id="AAF98414.1"/>
    </source>
</evidence>
<evidence type="ECO:0000312" key="11">
    <source>
        <dbReference type="Proteomes" id="UP000006548"/>
    </source>
</evidence>
<proteinExistence type="evidence at transcript level"/>
<accession>Q9FZ81</accession>
<sequence length="336" mass="37441">MKAIFNRRVVVDSSSRLTKLLANPTTHSHLNRQTFTSLYKPNQSRHFRTHYLPSSPSSPPVSRFDPSQLWRSEKIRGFFASALGNKAVKLGNLVESRVGFIGSQFPKKGFEFQRFSGFQRRGWKHWLQGLSDRDVVLGLVIANAGVFVMWRVFNQQFMMNNFMISLDNFKSGRLHTLITSAFSHIDIGHIVSNMIGLYFFGTSIARNFGPQFLLKLYLAGALGGSVFYLIHHAYMAATSPKGQGAFVRDPSRTPGLGASGAVNAIMLLDIFLHPRATLYLEFFIPVPAMLLGIFLIGKDILRITEGNSNISGSAHLGGAAVAAIAWARIRKGRFRF</sequence>
<feature type="transit peptide" description="Mitochondrion" evidence="2">
    <location>
        <begin position="1"/>
        <end position="85"/>
    </location>
</feature>
<feature type="chain" id="PRO_0000433333" description="RHOMBOID-like protein 12, mitochondrial">
    <location>
        <begin position="86"/>
        <end position="336"/>
    </location>
</feature>
<feature type="transmembrane region" description="Helical" evidence="2">
    <location>
        <begin position="135"/>
        <end position="155"/>
    </location>
</feature>
<feature type="transmembrane region" description="Helical" evidence="2">
    <location>
        <begin position="185"/>
        <end position="205"/>
    </location>
</feature>
<feature type="transmembrane region" description="Helical" evidence="2">
    <location>
        <begin position="216"/>
        <end position="236"/>
    </location>
</feature>
<feature type="transmembrane region" description="Helical" evidence="2">
    <location>
        <begin position="254"/>
        <end position="274"/>
    </location>
</feature>
<feature type="transmembrane region" description="Helical" evidence="2">
    <location>
        <begin position="276"/>
        <end position="296"/>
    </location>
</feature>
<feature type="transmembrane region" description="Helical" evidence="2">
    <location>
        <begin position="307"/>
        <end position="327"/>
    </location>
</feature>
<feature type="active site" description="Nucleophile" evidence="1">
    <location>
        <position position="259"/>
    </location>
</feature>
<feature type="active site" description="Charge relay system" evidence="1">
    <location>
        <position position="315"/>
    </location>
</feature>
<protein>
    <recommendedName>
        <fullName evidence="5">RHOMBOID-like protein 12, mitochondrial</fullName>
        <shortName evidence="5">AtRBL12</shortName>
        <ecNumber evidence="7">3.4.21.-</ecNumber>
    </recommendedName>
    <alternativeName>
        <fullName evidence="6">Presenilins-associated rhomboid-like protein</fullName>
    </alternativeName>
</protein>
<dbReference type="EC" id="3.4.21.-" evidence="7"/>
<dbReference type="EMBL" id="AC026238">
    <property type="protein sequence ID" value="AAF98414.1"/>
    <property type="molecule type" value="Genomic_DNA"/>
</dbReference>
<dbReference type="EMBL" id="CP002684">
    <property type="protein sequence ID" value="AEE29733.1"/>
    <property type="molecule type" value="Genomic_DNA"/>
</dbReference>
<dbReference type="EMBL" id="AY081685">
    <property type="protein sequence ID" value="AAM10247.1"/>
    <property type="molecule type" value="mRNA"/>
</dbReference>
<dbReference type="EMBL" id="AY086276">
    <property type="protein sequence ID" value="AAM64348.1"/>
    <property type="molecule type" value="mRNA"/>
</dbReference>
<dbReference type="EMBL" id="AF370504">
    <property type="protein sequence ID" value="AAK43881.1"/>
    <property type="molecule type" value="mRNA"/>
</dbReference>
<dbReference type="PIR" id="F86319">
    <property type="entry name" value="F86319"/>
</dbReference>
<dbReference type="RefSeq" id="NP_564058.1">
    <property type="nucleotide sequence ID" value="NM_101718.5"/>
</dbReference>
<dbReference type="SMR" id="Q9FZ81"/>
<dbReference type="FunCoup" id="Q9FZ81">
    <property type="interactions" value="2105"/>
</dbReference>
<dbReference type="STRING" id="3702.Q9FZ81"/>
<dbReference type="MEROPS" id="S54.A07"/>
<dbReference type="PaxDb" id="3702-AT1G18600.1"/>
<dbReference type="ProteomicsDB" id="236472"/>
<dbReference type="EnsemblPlants" id="AT1G18600.1">
    <property type="protein sequence ID" value="AT1G18600.1"/>
    <property type="gene ID" value="AT1G18600"/>
</dbReference>
<dbReference type="GeneID" id="838441"/>
<dbReference type="Gramene" id="AT1G18600.1">
    <property type="protein sequence ID" value="AT1G18600.1"/>
    <property type="gene ID" value="AT1G18600"/>
</dbReference>
<dbReference type="KEGG" id="ath:AT1G18600"/>
<dbReference type="Araport" id="AT1G18600"/>
<dbReference type="TAIR" id="AT1G18600">
    <property type="gene designation" value="RBL12"/>
</dbReference>
<dbReference type="eggNOG" id="KOG2980">
    <property type="taxonomic scope" value="Eukaryota"/>
</dbReference>
<dbReference type="HOGENOM" id="CLU_048192_0_0_1"/>
<dbReference type="InParanoid" id="Q9FZ81"/>
<dbReference type="OMA" id="HFRTHYL"/>
<dbReference type="PhylomeDB" id="Q9FZ81"/>
<dbReference type="PRO" id="PR:Q9FZ81"/>
<dbReference type="Proteomes" id="UP000006548">
    <property type="component" value="Chromosome 1"/>
</dbReference>
<dbReference type="ExpressionAtlas" id="Q9FZ81">
    <property type="expression patterns" value="baseline and differential"/>
</dbReference>
<dbReference type="GO" id="GO:0031966">
    <property type="term" value="C:mitochondrial membrane"/>
    <property type="evidence" value="ECO:0007669"/>
    <property type="project" value="UniProtKB-SubCell"/>
</dbReference>
<dbReference type="GO" id="GO:0005739">
    <property type="term" value="C:mitochondrion"/>
    <property type="evidence" value="ECO:0000314"/>
    <property type="project" value="TAIR"/>
</dbReference>
<dbReference type="GO" id="GO:0004252">
    <property type="term" value="F:serine-type endopeptidase activity"/>
    <property type="evidence" value="ECO:0007669"/>
    <property type="project" value="InterPro"/>
</dbReference>
<dbReference type="GO" id="GO:0006508">
    <property type="term" value="P:proteolysis"/>
    <property type="evidence" value="ECO:0007669"/>
    <property type="project" value="UniProtKB-KW"/>
</dbReference>
<dbReference type="FunFam" id="1.20.1540.10:FF:000018">
    <property type="entry name" value="RHOMBOID-like protein 12, mitochondrial"/>
    <property type="match status" value="1"/>
</dbReference>
<dbReference type="Gene3D" id="1.20.1540.10">
    <property type="entry name" value="Rhomboid-like"/>
    <property type="match status" value="1"/>
</dbReference>
<dbReference type="InterPro" id="IPR022764">
    <property type="entry name" value="Peptidase_S54_rhomboid_dom"/>
</dbReference>
<dbReference type="InterPro" id="IPR035952">
    <property type="entry name" value="Rhomboid-like_sf"/>
</dbReference>
<dbReference type="InterPro" id="IPR050925">
    <property type="entry name" value="Rhomboid_protease_S54"/>
</dbReference>
<dbReference type="PANTHER" id="PTHR43731:SF14">
    <property type="entry name" value="PRESENILIN-ASSOCIATED RHOMBOID-LIKE PROTEIN, MITOCHONDRIAL"/>
    <property type="match status" value="1"/>
</dbReference>
<dbReference type="PANTHER" id="PTHR43731">
    <property type="entry name" value="RHOMBOID PROTEASE"/>
    <property type="match status" value="1"/>
</dbReference>
<dbReference type="Pfam" id="PF01694">
    <property type="entry name" value="Rhomboid"/>
    <property type="match status" value="1"/>
</dbReference>
<dbReference type="SUPFAM" id="SSF144091">
    <property type="entry name" value="Rhomboid-like"/>
    <property type="match status" value="1"/>
</dbReference>
<comment type="function">
    <text evidence="3">Probable rhomboid-type serine protease that catalyzes intramembrane proteolysis. Unable to cleave either of the yeast Pcp1 substrates in yeast cells.</text>
</comment>
<comment type="subcellular location">
    <subcellularLocation>
        <location evidence="3 4">Mitochondrion membrane</location>
        <topology evidence="2">Multi-pass membrane protein</topology>
    </subcellularLocation>
</comment>
<comment type="miscellaneous">
    <text evidence="8">The functional differences between RBL12 and the yeast Pcp1 appear to be at least caused by differences in their transmembrane domains.</text>
</comment>
<comment type="similarity">
    <text evidence="7">Belongs to the peptidase S54 family.</text>
</comment>